<proteinExistence type="inferred from homology"/>
<organism>
    <name type="scientific">Burkholderia pseudomallei (strain K96243)</name>
    <dbReference type="NCBI Taxonomy" id="272560"/>
    <lineage>
        <taxon>Bacteria</taxon>
        <taxon>Pseudomonadati</taxon>
        <taxon>Pseudomonadota</taxon>
        <taxon>Betaproteobacteria</taxon>
        <taxon>Burkholderiales</taxon>
        <taxon>Burkholderiaceae</taxon>
        <taxon>Burkholderia</taxon>
        <taxon>pseudomallei group</taxon>
    </lineage>
</organism>
<dbReference type="EC" id="2.7.7.6" evidence="1"/>
<dbReference type="EMBL" id="BX571965">
    <property type="protein sequence ID" value="CAH37231.1"/>
    <property type="molecule type" value="Genomic_DNA"/>
</dbReference>
<dbReference type="RefSeq" id="WP_004521902.1">
    <property type="nucleotide sequence ID" value="NZ_CP009538.1"/>
</dbReference>
<dbReference type="RefSeq" id="YP_109814.1">
    <property type="nucleotide sequence ID" value="NC_006350.1"/>
</dbReference>
<dbReference type="SMR" id="Q63Q04"/>
<dbReference type="STRING" id="272560.BPSL3220"/>
<dbReference type="GeneID" id="93061839"/>
<dbReference type="KEGG" id="bps:BPSL3220"/>
<dbReference type="PATRIC" id="fig|272560.51.peg.2018"/>
<dbReference type="eggNOG" id="COG0086">
    <property type="taxonomic scope" value="Bacteria"/>
</dbReference>
<dbReference type="Proteomes" id="UP000000605">
    <property type="component" value="Chromosome 1"/>
</dbReference>
<dbReference type="GO" id="GO:0000428">
    <property type="term" value="C:DNA-directed RNA polymerase complex"/>
    <property type="evidence" value="ECO:0007669"/>
    <property type="project" value="UniProtKB-KW"/>
</dbReference>
<dbReference type="GO" id="GO:0003677">
    <property type="term" value="F:DNA binding"/>
    <property type="evidence" value="ECO:0007669"/>
    <property type="project" value="UniProtKB-UniRule"/>
</dbReference>
<dbReference type="GO" id="GO:0003899">
    <property type="term" value="F:DNA-directed RNA polymerase activity"/>
    <property type="evidence" value="ECO:0007669"/>
    <property type="project" value="UniProtKB-UniRule"/>
</dbReference>
<dbReference type="GO" id="GO:0000287">
    <property type="term" value="F:magnesium ion binding"/>
    <property type="evidence" value="ECO:0007669"/>
    <property type="project" value="UniProtKB-UniRule"/>
</dbReference>
<dbReference type="GO" id="GO:0008270">
    <property type="term" value="F:zinc ion binding"/>
    <property type="evidence" value="ECO:0007669"/>
    <property type="project" value="UniProtKB-UniRule"/>
</dbReference>
<dbReference type="GO" id="GO:0006351">
    <property type="term" value="P:DNA-templated transcription"/>
    <property type="evidence" value="ECO:0007669"/>
    <property type="project" value="UniProtKB-UniRule"/>
</dbReference>
<dbReference type="CDD" id="cd02655">
    <property type="entry name" value="RNAP_beta'_C"/>
    <property type="match status" value="1"/>
</dbReference>
<dbReference type="CDD" id="cd01609">
    <property type="entry name" value="RNAP_beta'_N"/>
    <property type="match status" value="1"/>
</dbReference>
<dbReference type="FunFam" id="1.10.132.30:FF:000003">
    <property type="entry name" value="DNA-directed RNA polymerase subunit beta"/>
    <property type="match status" value="1"/>
</dbReference>
<dbReference type="FunFam" id="1.10.150.390:FF:000002">
    <property type="entry name" value="DNA-directed RNA polymerase subunit beta"/>
    <property type="match status" value="1"/>
</dbReference>
<dbReference type="FunFam" id="4.10.860.120:FF:000001">
    <property type="entry name" value="DNA-directed RNA polymerase subunit beta"/>
    <property type="match status" value="1"/>
</dbReference>
<dbReference type="Gene3D" id="1.10.132.30">
    <property type="match status" value="1"/>
</dbReference>
<dbReference type="Gene3D" id="1.10.150.390">
    <property type="match status" value="1"/>
</dbReference>
<dbReference type="Gene3D" id="1.10.1790.20">
    <property type="match status" value="1"/>
</dbReference>
<dbReference type="Gene3D" id="1.10.40.90">
    <property type="match status" value="1"/>
</dbReference>
<dbReference type="Gene3D" id="2.40.40.20">
    <property type="match status" value="1"/>
</dbReference>
<dbReference type="Gene3D" id="2.40.50.100">
    <property type="match status" value="3"/>
</dbReference>
<dbReference type="Gene3D" id="4.10.860.120">
    <property type="entry name" value="RNA polymerase II, clamp domain"/>
    <property type="match status" value="1"/>
</dbReference>
<dbReference type="Gene3D" id="1.10.274.100">
    <property type="entry name" value="RNA polymerase Rpb1, domain 3"/>
    <property type="match status" value="1"/>
</dbReference>
<dbReference type="HAMAP" id="MF_01322">
    <property type="entry name" value="RNApol_bact_RpoC"/>
    <property type="match status" value="1"/>
</dbReference>
<dbReference type="InterPro" id="IPR045867">
    <property type="entry name" value="DNA-dir_RpoC_beta_prime"/>
</dbReference>
<dbReference type="InterPro" id="IPR012754">
    <property type="entry name" value="DNA-dir_RpoC_beta_prime_bact"/>
</dbReference>
<dbReference type="InterPro" id="IPR000722">
    <property type="entry name" value="RNA_pol_asu"/>
</dbReference>
<dbReference type="InterPro" id="IPR006592">
    <property type="entry name" value="RNA_pol_N"/>
</dbReference>
<dbReference type="InterPro" id="IPR007080">
    <property type="entry name" value="RNA_pol_Rpb1_1"/>
</dbReference>
<dbReference type="InterPro" id="IPR007066">
    <property type="entry name" value="RNA_pol_Rpb1_3"/>
</dbReference>
<dbReference type="InterPro" id="IPR042102">
    <property type="entry name" value="RNA_pol_Rpb1_3_sf"/>
</dbReference>
<dbReference type="InterPro" id="IPR007083">
    <property type="entry name" value="RNA_pol_Rpb1_4"/>
</dbReference>
<dbReference type="InterPro" id="IPR007081">
    <property type="entry name" value="RNA_pol_Rpb1_5"/>
</dbReference>
<dbReference type="InterPro" id="IPR044893">
    <property type="entry name" value="RNA_pol_Rpb1_clamp_domain"/>
</dbReference>
<dbReference type="InterPro" id="IPR038120">
    <property type="entry name" value="Rpb1_funnel_sf"/>
</dbReference>
<dbReference type="NCBIfam" id="TIGR02386">
    <property type="entry name" value="rpoC_TIGR"/>
    <property type="match status" value="1"/>
</dbReference>
<dbReference type="PANTHER" id="PTHR19376">
    <property type="entry name" value="DNA-DIRECTED RNA POLYMERASE"/>
    <property type="match status" value="1"/>
</dbReference>
<dbReference type="PANTHER" id="PTHR19376:SF54">
    <property type="entry name" value="DNA-DIRECTED RNA POLYMERASE SUBUNIT BETA"/>
    <property type="match status" value="1"/>
</dbReference>
<dbReference type="Pfam" id="PF04997">
    <property type="entry name" value="RNA_pol_Rpb1_1"/>
    <property type="match status" value="1"/>
</dbReference>
<dbReference type="Pfam" id="PF00623">
    <property type="entry name" value="RNA_pol_Rpb1_2"/>
    <property type="match status" value="2"/>
</dbReference>
<dbReference type="Pfam" id="PF04983">
    <property type="entry name" value="RNA_pol_Rpb1_3"/>
    <property type="match status" value="1"/>
</dbReference>
<dbReference type="Pfam" id="PF05000">
    <property type="entry name" value="RNA_pol_Rpb1_4"/>
    <property type="match status" value="1"/>
</dbReference>
<dbReference type="Pfam" id="PF04998">
    <property type="entry name" value="RNA_pol_Rpb1_5"/>
    <property type="match status" value="1"/>
</dbReference>
<dbReference type="SMART" id="SM00663">
    <property type="entry name" value="RPOLA_N"/>
    <property type="match status" value="1"/>
</dbReference>
<dbReference type="SUPFAM" id="SSF64484">
    <property type="entry name" value="beta and beta-prime subunits of DNA dependent RNA-polymerase"/>
    <property type="match status" value="1"/>
</dbReference>
<feature type="chain" id="PRO_0000225518" description="DNA-directed RNA polymerase subunit beta'">
    <location>
        <begin position="1"/>
        <end position="1412"/>
    </location>
</feature>
<feature type="region of interest" description="Disordered" evidence="2">
    <location>
        <begin position="1393"/>
        <end position="1412"/>
    </location>
</feature>
<feature type="binding site" evidence="1">
    <location>
        <position position="70"/>
    </location>
    <ligand>
        <name>Zn(2+)</name>
        <dbReference type="ChEBI" id="CHEBI:29105"/>
        <label>1</label>
    </ligand>
</feature>
<feature type="binding site" evidence="1">
    <location>
        <position position="72"/>
    </location>
    <ligand>
        <name>Zn(2+)</name>
        <dbReference type="ChEBI" id="CHEBI:29105"/>
        <label>1</label>
    </ligand>
</feature>
<feature type="binding site" evidence="1">
    <location>
        <position position="85"/>
    </location>
    <ligand>
        <name>Zn(2+)</name>
        <dbReference type="ChEBI" id="CHEBI:29105"/>
        <label>1</label>
    </ligand>
</feature>
<feature type="binding site" evidence="1">
    <location>
        <position position="88"/>
    </location>
    <ligand>
        <name>Zn(2+)</name>
        <dbReference type="ChEBI" id="CHEBI:29105"/>
        <label>1</label>
    </ligand>
</feature>
<feature type="binding site" evidence="1">
    <location>
        <position position="460"/>
    </location>
    <ligand>
        <name>Mg(2+)</name>
        <dbReference type="ChEBI" id="CHEBI:18420"/>
    </ligand>
</feature>
<feature type="binding site" evidence="1">
    <location>
        <position position="462"/>
    </location>
    <ligand>
        <name>Mg(2+)</name>
        <dbReference type="ChEBI" id="CHEBI:18420"/>
    </ligand>
</feature>
<feature type="binding site" evidence="1">
    <location>
        <position position="464"/>
    </location>
    <ligand>
        <name>Mg(2+)</name>
        <dbReference type="ChEBI" id="CHEBI:18420"/>
    </ligand>
</feature>
<feature type="binding site" evidence="1">
    <location>
        <position position="819"/>
    </location>
    <ligand>
        <name>Zn(2+)</name>
        <dbReference type="ChEBI" id="CHEBI:29105"/>
        <label>2</label>
    </ligand>
</feature>
<feature type="binding site" evidence="1">
    <location>
        <position position="893"/>
    </location>
    <ligand>
        <name>Zn(2+)</name>
        <dbReference type="ChEBI" id="CHEBI:29105"/>
        <label>2</label>
    </ligand>
</feature>
<feature type="binding site" evidence="1">
    <location>
        <position position="900"/>
    </location>
    <ligand>
        <name>Zn(2+)</name>
        <dbReference type="ChEBI" id="CHEBI:29105"/>
        <label>2</label>
    </ligand>
</feature>
<feature type="binding site" evidence="1">
    <location>
        <position position="903"/>
    </location>
    <ligand>
        <name>Zn(2+)</name>
        <dbReference type="ChEBI" id="CHEBI:29105"/>
        <label>2</label>
    </ligand>
</feature>
<accession>Q63Q04</accession>
<protein>
    <recommendedName>
        <fullName evidence="1">DNA-directed RNA polymerase subunit beta'</fullName>
        <shortName evidence="1">RNAP subunit beta'</shortName>
        <ecNumber evidence="1">2.7.7.6</ecNumber>
    </recommendedName>
    <alternativeName>
        <fullName evidence="1">RNA polymerase subunit beta'</fullName>
    </alternativeName>
    <alternativeName>
        <fullName evidence="1">Transcriptase subunit beta'</fullName>
    </alternativeName>
</protein>
<gene>
    <name evidence="1" type="primary">rpoC</name>
    <name type="ordered locus">BPSL3220</name>
</gene>
<name>RPOC_BURPS</name>
<reference key="1">
    <citation type="journal article" date="2004" name="Proc. Natl. Acad. Sci. U.S.A.">
        <title>Genomic plasticity of the causative agent of melioidosis, Burkholderia pseudomallei.</title>
        <authorList>
            <person name="Holden M.T.G."/>
            <person name="Titball R.W."/>
            <person name="Peacock S.J."/>
            <person name="Cerdeno-Tarraga A.-M."/>
            <person name="Atkins T."/>
            <person name="Crossman L.C."/>
            <person name="Pitt T."/>
            <person name="Churcher C."/>
            <person name="Mungall K.L."/>
            <person name="Bentley S.D."/>
            <person name="Sebaihia M."/>
            <person name="Thomson N.R."/>
            <person name="Bason N."/>
            <person name="Beacham I.R."/>
            <person name="Brooks K."/>
            <person name="Brown K.A."/>
            <person name="Brown N.F."/>
            <person name="Challis G.L."/>
            <person name="Cherevach I."/>
            <person name="Chillingworth T."/>
            <person name="Cronin A."/>
            <person name="Crossett B."/>
            <person name="Davis P."/>
            <person name="DeShazer D."/>
            <person name="Feltwell T."/>
            <person name="Fraser A."/>
            <person name="Hance Z."/>
            <person name="Hauser H."/>
            <person name="Holroyd S."/>
            <person name="Jagels K."/>
            <person name="Keith K.E."/>
            <person name="Maddison M."/>
            <person name="Moule S."/>
            <person name="Price C."/>
            <person name="Quail M.A."/>
            <person name="Rabbinowitsch E."/>
            <person name="Rutherford K."/>
            <person name="Sanders M."/>
            <person name="Simmonds M."/>
            <person name="Songsivilai S."/>
            <person name="Stevens K."/>
            <person name="Tumapa S."/>
            <person name="Vesaratchavest M."/>
            <person name="Whitehead S."/>
            <person name="Yeats C."/>
            <person name="Barrell B.G."/>
            <person name="Oyston P.C.F."/>
            <person name="Parkhill J."/>
        </authorList>
    </citation>
    <scope>NUCLEOTIDE SEQUENCE [LARGE SCALE GENOMIC DNA]</scope>
    <source>
        <strain>K96243</strain>
    </source>
</reference>
<keyword id="KW-0240">DNA-directed RNA polymerase</keyword>
<keyword id="KW-0460">Magnesium</keyword>
<keyword id="KW-0479">Metal-binding</keyword>
<keyword id="KW-0548">Nucleotidyltransferase</keyword>
<keyword id="KW-1185">Reference proteome</keyword>
<keyword id="KW-0804">Transcription</keyword>
<keyword id="KW-0808">Transferase</keyword>
<keyword id="KW-0862">Zinc</keyword>
<comment type="function">
    <text evidence="1">DNA-dependent RNA polymerase catalyzes the transcription of DNA into RNA using the four ribonucleoside triphosphates as substrates.</text>
</comment>
<comment type="catalytic activity">
    <reaction evidence="1">
        <text>RNA(n) + a ribonucleoside 5'-triphosphate = RNA(n+1) + diphosphate</text>
        <dbReference type="Rhea" id="RHEA:21248"/>
        <dbReference type="Rhea" id="RHEA-COMP:14527"/>
        <dbReference type="Rhea" id="RHEA-COMP:17342"/>
        <dbReference type="ChEBI" id="CHEBI:33019"/>
        <dbReference type="ChEBI" id="CHEBI:61557"/>
        <dbReference type="ChEBI" id="CHEBI:140395"/>
        <dbReference type="EC" id="2.7.7.6"/>
    </reaction>
</comment>
<comment type="cofactor">
    <cofactor evidence="1">
        <name>Mg(2+)</name>
        <dbReference type="ChEBI" id="CHEBI:18420"/>
    </cofactor>
    <text evidence="1">Binds 1 Mg(2+) ion per subunit.</text>
</comment>
<comment type="cofactor">
    <cofactor evidence="1">
        <name>Zn(2+)</name>
        <dbReference type="ChEBI" id="CHEBI:29105"/>
    </cofactor>
    <text evidence="1">Binds 2 Zn(2+) ions per subunit.</text>
</comment>
<comment type="subunit">
    <text evidence="1">The RNAP catalytic core consists of 2 alpha, 1 beta, 1 beta' and 1 omega subunit. When a sigma factor is associated with the core the holoenzyme is formed, which can initiate transcription.</text>
</comment>
<comment type="similarity">
    <text evidence="1">Belongs to the RNA polymerase beta' chain family.</text>
</comment>
<sequence length="1412" mass="155992">MKALLDLFKQVQQEEIFDAIKIGLASPDKIRSWSFGEVKKPETINYRTFKPERDGLFCAKIFGPIKDYECLCGKYKRLKHRGVICEKCGVEVTLAKVRRERMGHIELASPVAHIWFLKSLPSRLGMVLDMTLRDIERVLYFEAYVVIDPGMTPLKARQIMTEEDYYNKVEEYGDEFRAEMGAEGVRELLRSINIDEQVETLRTELKNTGSEAKIKKYAKRLKVLEAFQRSGIKPDWMILEVLPVLPPELRPLVPLDGGRFATSDLNDLYRRVINRNNRLKRLLELKAPEIIVRNEKRMLQEAVDSLLDNGRRGKAMTGANKRPLKSLADMIKGKGGRFRQNLLGKRVDYSGRSVIVVGPTLKLHQCGLPKLMALELFKPFIFNKLEVMGVATTIKAAKKEVENQTPVVWDILEEVIREHPVMLNRAPTLHRLGIQAFEPVLIEGKAIQLHPLVCAAFNADFDGDQMAVHVPLSLEAQMEARTLMLASNNVLFPANGDPSIVPSQDIVLGLYYATREAINGKGEGLSFTGVSEVIRAYENKEVELASRVNVRITEMVRNEDTSEGAPQFVPKISLYATTVGRAILSEILPPGLPFSVLNKPLKKKEISRLINTAFRKCGLRATVVFADQLMQSGFRLATRAGISICVDDMLVPTQKETIVGDAAKKVKEYDRQYMSGLVTAQERYNNVVDIWSATSEAVGKAMMEQLSTEPVIDRDGNETRQESFNSIYMMADSGARGSAVQIRQLAGMRGLMAKPDGSIIETPITANFREGLNVLQYFISTHGARKGLADTALKTANSGYLTRRLVDVTQDLVVVEDDCGTSNGVAMKALVEGGEVVEALRDRILGRVAASDVVNPETQETLYEAGALLDETAVEDIERLGIDEVRVRTALTCETRYGLCASCYGRDLGRGSLVNVGEAVGVIAAQSIGEPGTQLTMRTFHIGGAASRAAVASSVEAKSNGTVRFTASMRYVTNAKGEQIVISRSGEALITDDIGRERERHKIPYGATLLQLDGAAIKAGTQLATWDPLTRPIITEYGGTVKFENVEEGVTVAKQIDDVTGLSTLVVIDVKRRGSQAAKSVRPQVKLLDANGDEVKIPGTEHAVQIGFQVGALITVKDGQQVQVGEVLARIPTESQKTRDITGGLPRVAELFEARSPKDAGILAEVTGTVSFGKDTKGKQRLVITDLEGNQHEFLIAKEKQVLVHDGQVVNKGEMIVDGPADPHDILRLQGIEALSRYIVDEVQDVYRLQGVKINDKHIEVIVRQMLRRVQIVDNGDTRFIPGEQVERSDMLDENDRMIAEDKRPATYDNILLGITKASLSTDSFISAASFQETTRVLTEAAIMGKRDDLRGLKENVIVGRLIPAGTGLAFHKARKAKEQSDRERFDQIAAEEAFEFGTPSAPAEEPQHPAE</sequence>
<evidence type="ECO:0000255" key="1">
    <source>
        <dbReference type="HAMAP-Rule" id="MF_01322"/>
    </source>
</evidence>
<evidence type="ECO:0000256" key="2">
    <source>
        <dbReference type="SAM" id="MobiDB-lite"/>
    </source>
</evidence>